<sequence>MAKIIDGKAIAAKIRGEITAEVAKLAAQGITPGLAVVLVGEDPASKVYVSMKEKACKDVGIFSDEYKLPAETTEEELLQLIDKLNKDRKIHGILVQLPLPKQINTEKVLEAISPEKDADGFHPYNVGRLVIGKPLFQPCTPYGVMVMLKETGVDLAGKEVVVVGRSNIVGKPVAFMCLQQNATVTLCHSKTRDLAAKVAMADVVIAAVGQPEMIKGAWIKKGAVVIDVGVNRVGEKKLVGDVEYEAASARASAITPVPGGVGPMTITMLLYNTLESAKRR</sequence>
<accession>B9M769</accession>
<protein>
    <recommendedName>
        <fullName evidence="1">Bifunctional protein FolD</fullName>
    </recommendedName>
    <domain>
        <recommendedName>
            <fullName evidence="1">Methylenetetrahydrofolate dehydrogenase</fullName>
            <ecNumber evidence="1">1.5.1.5</ecNumber>
        </recommendedName>
    </domain>
    <domain>
        <recommendedName>
            <fullName evidence="1">Methenyltetrahydrofolate cyclohydrolase</fullName>
            <ecNumber evidence="1">3.5.4.9</ecNumber>
        </recommendedName>
    </domain>
</protein>
<organism>
    <name type="scientific">Geotalea daltonii (strain DSM 22248 / JCM 15807 / FRC-32)</name>
    <name type="common">Geobacter daltonii</name>
    <dbReference type="NCBI Taxonomy" id="316067"/>
    <lineage>
        <taxon>Bacteria</taxon>
        <taxon>Pseudomonadati</taxon>
        <taxon>Thermodesulfobacteriota</taxon>
        <taxon>Desulfuromonadia</taxon>
        <taxon>Geobacterales</taxon>
        <taxon>Geobacteraceae</taxon>
        <taxon>Geotalea</taxon>
    </lineage>
</organism>
<proteinExistence type="inferred from homology"/>
<gene>
    <name evidence="1" type="primary">folD</name>
    <name type="ordered locus">Geob_1799</name>
</gene>
<keyword id="KW-0028">Amino-acid biosynthesis</keyword>
<keyword id="KW-0368">Histidine biosynthesis</keyword>
<keyword id="KW-0378">Hydrolase</keyword>
<keyword id="KW-0486">Methionine biosynthesis</keyword>
<keyword id="KW-0511">Multifunctional enzyme</keyword>
<keyword id="KW-0521">NADP</keyword>
<keyword id="KW-0554">One-carbon metabolism</keyword>
<keyword id="KW-0560">Oxidoreductase</keyword>
<keyword id="KW-0658">Purine biosynthesis</keyword>
<keyword id="KW-1185">Reference proteome</keyword>
<feature type="chain" id="PRO_1000185614" description="Bifunctional protein FolD">
    <location>
        <begin position="1"/>
        <end position="280"/>
    </location>
</feature>
<feature type="binding site" evidence="1">
    <location>
        <begin position="164"/>
        <end position="166"/>
    </location>
    <ligand>
        <name>NADP(+)</name>
        <dbReference type="ChEBI" id="CHEBI:58349"/>
    </ligand>
</feature>
<feature type="binding site" evidence="1">
    <location>
        <position position="189"/>
    </location>
    <ligand>
        <name>NADP(+)</name>
        <dbReference type="ChEBI" id="CHEBI:58349"/>
    </ligand>
</feature>
<feature type="binding site" evidence="1">
    <location>
        <position position="230"/>
    </location>
    <ligand>
        <name>NADP(+)</name>
        <dbReference type="ChEBI" id="CHEBI:58349"/>
    </ligand>
</feature>
<evidence type="ECO:0000255" key="1">
    <source>
        <dbReference type="HAMAP-Rule" id="MF_01576"/>
    </source>
</evidence>
<name>FOLD_GEODF</name>
<reference key="1">
    <citation type="submission" date="2009-01" db="EMBL/GenBank/DDBJ databases">
        <title>Complete sequence of Geobacter sp. FRC-32.</title>
        <authorList>
            <consortium name="US DOE Joint Genome Institute"/>
            <person name="Lucas S."/>
            <person name="Copeland A."/>
            <person name="Lapidus A."/>
            <person name="Glavina del Rio T."/>
            <person name="Dalin E."/>
            <person name="Tice H."/>
            <person name="Bruce D."/>
            <person name="Goodwin L."/>
            <person name="Pitluck S."/>
            <person name="Saunders E."/>
            <person name="Brettin T."/>
            <person name="Detter J.C."/>
            <person name="Han C."/>
            <person name="Larimer F."/>
            <person name="Land M."/>
            <person name="Hauser L."/>
            <person name="Kyrpides N."/>
            <person name="Ovchinnikova G."/>
            <person name="Kostka J."/>
            <person name="Richardson P."/>
        </authorList>
    </citation>
    <scope>NUCLEOTIDE SEQUENCE [LARGE SCALE GENOMIC DNA]</scope>
    <source>
        <strain>DSM 22248 / JCM 15807 / FRC-32</strain>
    </source>
</reference>
<comment type="function">
    <text evidence="1">Catalyzes the oxidation of 5,10-methylenetetrahydrofolate to 5,10-methenyltetrahydrofolate and then the hydrolysis of 5,10-methenyltetrahydrofolate to 10-formyltetrahydrofolate.</text>
</comment>
<comment type="catalytic activity">
    <reaction evidence="1">
        <text>(6R)-5,10-methylene-5,6,7,8-tetrahydrofolate + NADP(+) = (6R)-5,10-methenyltetrahydrofolate + NADPH</text>
        <dbReference type="Rhea" id="RHEA:22812"/>
        <dbReference type="ChEBI" id="CHEBI:15636"/>
        <dbReference type="ChEBI" id="CHEBI:57455"/>
        <dbReference type="ChEBI" id="CHEBI:57783"/>
        <dbReference type="ChEBI" id="CHEBI:58349"/>
        <dbReference type="EC" id="1.5.1.5"/>
    </reaction>
</comment>
<comment type="catalytic activity">
    <reaction evidence="1">
        <text>(6R)-5,10-methenyltetrahydrofolate + H2O = (6R)-10-formyltetrahydrofolate + H(+)</text>
        <dbReference type="Rhea" id="RHEA:23700"/>
        <dbReference type="ChEBI" id="CHEBI:15377"/>
        <dbReference type="ChEBI" id="CHEBI:15378"/>
        <dbReference type="ChEBI" id="CHEBI:57455"/>
        <dbReference type="ChEBI" id="CHEBI:195366"/>
        <dbReference type="EC" id="3.5.4.9"/>
    </reaction>
</comment>
<comment type="pathway">
    <text evidence="1">One-carbon metabolism; tetrahydrofolate interconversion.</text>
</comment>
<comment type="subunit">
    <text evidence="1">Homodimer.</text>
</comment>
<comment type="similarity">
    <text evidence="1">Belongs to the tetrahydrofolate dehydrogenase/cyclohydrolase family.</text>
</comment>
<dbReference type="EC" id="1.5.1.5" evidence="1"/>
<dbReference type="EC" id="3.5.4.9" evidence="1"/>
<dbReference type="EMBL" id="CP001390">
    <property type="protein sequence ID" value="ACM20157.1"/>
    <property type="molecule type" value="Genomic_DNA"/>
</dbReference>
<dbReference type="RefSeq" id="WP_012646886.1">
    <property type="nucleotide sequence ID" value="NC_011979.1"/>
</dbReference>
<dbReference type="SMR" id="B9M769"/>
<dbReference type="STRING" id="316067.Geob_1799"/>
<dbReference type="KEGG" id="geo:Geob_1799"/>
<dbReference type="eggNOG" id="COG0190">
    <property type="taxonomic scope" value="Bacteria"/>
</dbReference>
<dbReference type="HOGENOM" id="CLU_034045_2_1_7"/>
<dbReference type="OrthoDB" id="9803580at2"/>
<dbReference type="UniPathway" id="UPA00193"/>
<dbReference type="Proteomes" id="UP000007721">
    <property type="component" value="Chromosome"/>
</dbReference>
<dbReference type="GO" id="GO:0005829">
    <property type="term" value="C:cytosol"/>
    <property type="evidence" value="ECO:0007669"/>
    <property type="project" value="TreeGrafter"/>
</dbReference>
<dbReference type="GO" id="GO:0004477">
    <property type="term" value="F:methenyltetrahydrofolate cyclohydrolase activity"/>
    <property type="evidence" value="ECO:0007669"/>
    <property type="project" value="UniProtKB-UniRule"/>
</dbReference>
<dbReference type="GO" id="GO:0004488">
    <property type="term" value="F:methylenetetrahydrofolate dehydrogenase (NADP+) activity"/>
    <property type="evidence" value="ECO:0007669"/>
    <property type="project" value="UniProtKB-UniRule"/>
</dbReference>
<dbReference type="GO" id="GO:0000105">
    <property type="term" value="P:L-histidine biosynthetic process"/>
    <property type="evidence" value="ECO:0007669"/>
    <property type="project" value="UniProtKB-KW"/>
</dbReference>
<dbReference type="GO" id="GO:0009086">
    <property type="term" value="P:methionine biosynthetic process"/>
    <property type="evidence" value="ECO:0007669"/>
    <property type="project" value="UniProtKB-KW"/>
</dbReference>
<dbReference type="GO" id="GO:0006164">
    <property type="term" value="P:purine nucleotide biosynthetic process"/>
    <property type="evidence" value="ECO:0007669"/>
    <property type="project" value="UniProtKB-KW"/>
</dbReference>
<dbReference type="GO" id="GO:0035999">
    <property type="term" value="P:tetrahydrofolate interconversion"/>
    <property type="evidence" value="ECO:0007669"/>
    <property type="project" value="UniProtKB-UniRule"/>
</dbReference>
<dbReference type="CDD" id="cd01080">
    <property type="entry name" value="NAD_bind_m-THF_DH_Cyclohyd"/>
    <property type="match status" value="1"/>
</dbReference>
<dbReference type="FunFam" id="3.40.50.10860:FF:000001">
    <property type="entry name" value="Bifunctional protein FolD"/>
    <property type="match status" value="1"/>
</dbReference>
<dbReference type="FunFam" id="3.40.50.720:FF:000094">
    <property type="entry name" value="Bifunctional protein FolD"/>
    <property type="match status" value="1"/>
</dbReference>
<dbReference type="Gene3D" id="3.40.50.10860">
    <property type="entry name" value="Leucine Dehydrogenase, chain A, domain 1"/>
    <property type="match status" value="1"/>
</dbReference>
<dbReference type="Gene3D" id="3.40.50.720">
    <property type="entry name" value="NAD(P)-binding Rossmann-like Domain"/>
    <property type="match status" value="1"/>
</dbReference>
<dbReference type="HAMAP" id="MF_01576">
    <property type="entry name" value="THF_DHG_CYH"/>
    <property type="match status" value="1"/>
</dbReference>
<dbReference type="InterPro" id="IPR046346">
    <property type="entry name" value="Aminoacid_DH-like_N_sf"/>
</dbReference>
<dbReference type="InterPro" id="IPR036291">
    <property type="entry name" value="NAD(P)-bd_dom_sf"/>
</dbReference>
<dbReference type="InterPro" id="IPR000672">
    <property type="entry name" value="THF_DH/CycHdrlase"/>
</dbReference>
<dbReference type="InterPro" id="IPR020630">
    <property type="entry name" value="THF_DH/CycHdrlase_cat_dom"/>
</dbReference>
<dbReference type="InterPro" id="IPR020867">
    <property type="entry name" value="THF_DH/CycHdrlase_CS"/>
</dbReference>
<dbReference type="InterPro" id="IPR020631">
    <property type="entry name" value="THF_DH/CycHdrlase_NAD-bd_dom"/>
</dbReference>
<dbReference type="NCBIfam" id="NF008058">
    <property type="entry name" value="PRK10792.1"/>
    <property type="match status" value="1"/>
</dbReference>
<dbReference type="NCBIfam" id="NF010783">
    <property type="entry name" value="PRK14186.1"/>
    <property type="match status" value="1"/>
</dbReference>
<dbReference type="NCBIfam" id="NF010785">
    <property type="entry name" value="PRK14188.1"/>
    <property type="match status" value="1"/>
</dbReference>
<dbReference type="PANTHER" id="PTHR48099:SF5">
    <property type="entry name" value="C-1-TETRAHYDROFOLATE SYNTHASE, CYTOPLASMIC"/>
    <property type="match status" value="1"/>
</dbReference>
<dbReference type="PANTHER" id="PTHR48099">
    <property type="entry name" value="C-1-TETRAHYDROFOLATE SYNTHASE, CYTOPLASMIC-RELATED"/>
    <property type="match status" value="1"/>
</dbReference>
<dbReference type="Pfam" id="PF00763">
    <property type="entry name" value="THF_DHG_CYH"/>
    <property type="match status" value="1"/>
</dbReference>
<dbReference type="Pfam" id="PF02882">
    <property type="entry name" value="THF_DHG_CYH_C"/>
    <property type="match status" value="1"/>
</dbReference>
<dbReference type="PRINTS" id="PR00085">
    <property type="entry name" value="THFDHDRGNASE"/>
</dbReference>
<dbReference type="SUPFAM" id="SSF53223">
    <property type="entry name" value="Aminoacid dehydrogenase-like, N-terminal domain"/>
    <property type="match status" value="1"/>
</dbReference>
<dbReference type="SUPFAM" id="SSF51735">
    <property type="entry name" value="NAD(P)-binding Rossmann-fold domains"/>
    <property type="match status" value="1"/>
</dbReference>
<dbReference type="PROSITE" id="PS00766">
    <property type="entry name" value="THF_DHG_CYH_1"/>
    <property type="match status" value="1"/>
</dbReference>
<dbReference type="PROSITE" id="PS00767">
    <property type="entry name" value="THF_DHG_CYH_2"/>
    <property type="match status" value="1"/>
</dbReference>